<dbReference type="EMBL" id="AM942444">
    <property type="protein sequence ID" value="CAQ04308.1"/>
    <property type="molecule type" value="Genomic_DNA"/>
</dbReference>
<dbReference type="RefSeq" id="WP_012359601.1">
    <property type="nucleotide sequence ID" value="NC_010545.1"/>
</dbReference>
<dbReference type="SMR" id="B1VEW9"/>
<dbReference type="STRING" id="504474.cu0348"/>
<dbReference type="GeneID" id="60605151"/>
<dbReference type="KEGG" id="cur:cu0348"/>
<dbReference type="eggNOG" id="COG0096">
    <property type="taxonomic scope" value="Bacteria"/>
</dbReference>
<dbReference type="HOGENOM" id="CLU_098428_0_1_11"/>
<dbReference type="Proteomes" id="UP000001727">
    <property type="component" value="Chromosome"/>
</dbReference>
<dbReference type="GO" id="GO:1990904">
    <property type="term" value="C:ribonucleoprotein complex"/>
    <property type="evidence" value="ECO:0007669"/>
    <property type="project" value="UniProtKB-KW"/>
</dbReference>
<dbReference type="GO" id="GO:0005840">
    <property type="term" value="C:ribosome"/>
    <property type="evidence" value="ECO:0007669"/>
    <property type="project" value="UniProtKB-KW"/>
</dbReference>
<dbReference type="GO" id="GO:0019843">
    <property type="term" value="F:rRNA binding"/>
    <property type="evidence" value="ECO:0007669"/>
    <property type="project" value="UniProtKB-UniRule"/>
</dbReference>
<dbReference type="GO" id="GO:0003735">
    <property type="term" value="F:structural constituent of ribosome"/>
    <property type="evidence" value="ECO:0007669"/>
    <property type="project" value="InterPro"/>
</dbReference>
<dbReference type="GO" id="GO:0006412">
    <property type="term" value="P:translation"/>
    <property type="evidence" value="ECO:0007669"/>
    <property type="project" value="UniProtKB-UniRule"/>
</dbReference>
<dbReference type="FunFam" id="3.30.1370.30:FF:000002">
    <property type="entry name" value="30S ribosomal protein S8"/>
    <property type="match status" value="1"/>
</dbReference>
<dbReference type="FunFam" id="3.30.1490.10:FF:000001">
    <property type="entry name" value="30S ribosomal protein S8"/>
    <property type="match status" value="1"/>
</dbReference>
<dbReference type="Gene3D" id="3.30.1370.30">
    <property type="match status" value="1"/>
</dbReference>
<dbReference type="Gene3D" id="3.30.1490.10">
    <property type="match status" value="1"/>
</dbReference>
<dbReference type="HAMAP" id="MF_01302_B">
    <property type="entry name" value="Ribosomal_uS8_B"/>
    <property type="match status" value="1"/>
</dbReference>
<dbReference type="InterPro" id="IPR000630">
    <property type="entry name" value="Ribosomal_uS8"/>
</dbReference>
<dbReference type="InterPro" id="IPR035987">
    <property type="entry name" value="Ribosomal_uS8_sf"/>
</dbReference>
<dbReference type="NCBIfam" id="NF001109">
    <property type="entry name" value="PRK00136.1"/>
    <property type="match status" value="1"/>
</dbReference>
<dbReference type="PANTHER" id="PTHR11758">
    <property type="entry name" value="40S RIBOSOMAL PROTEIN S15A"/>
    <property type="match status" value="1"/>
</dbReference>
<dbReference type="Pfam" id="PF00410">
    <property type="entry name" value="Ribosomal_S8"/>
    <property type="match status" value="1"/>
</dbReference>
<dbReference type="SUPFAM" id="SSF56047">
    <property type="entry name" value="Ribosomal protein S8"/>
    <property type="match status" value="1"/>
</dbReference>
<keyword id="KW-1185">Reference proteome</keyword>
<keyword id="KW-0687">Ribonucleoprotein</keyword>
<keyword id="KW-0689">Ribosomal protein</keyword>
<keyword id="KW-0694">RNA-binding</keyword>
<keyword id="KW-0699">rRNA-binding</keyword>
<reference key="1">
    <citation type="journal article" date="2008" name="J. Biotechnol.">
        <title>The lifestyle of Corynebacterium urealyticum derived from its complete genome sequence established by pyrosequencing.</title>
        <authorList>
            <person name="Tauch A."/>
            <person name="Trost E."/>
            <person name="Tilker A."/>
            <person name="Ludewig U."/>
            <person name="Schneiker S."/>
            <person name="Goesmann A."/>
            <person name="Arnold W."/>
            <person name="Bekel T."/>
            <person name="Brinkrolf K."/>
            <person name="Brune I."/>
            <person name="Goetker S."/>
            <person name="Kalinowski J."/>
            <person name="Kamp P.-B."/>
            <person name="Lobo F.P."/>
            <person name="Viehoever P."/>
            <person name="Weisshaar B."/>
            <person name="Soriano F."/>
            <person name="Droege M."/>
            <person name="Puehler A."/>
        </authorList>
    </citation>
    <scope>NUCLEOTIDE SEQUENCE [LARGE SCALE GENOMIC DNA]</scope>
    <source>
        <strain>ATCC 43042 / DSM 7109</strain>
    </source>
</reference>
<protein>
    <recommendedName>
        <fullName evidence="1">Small ribosomal subunit protein uS8</fullName>
    </recommendedName>
    <alternativeName>
        <fullName evidence="2">30S ribosomal protein S8</fullName>
    </alternativeName>
</protein>
<evidence type="ECO:0000255" key="1">
    <source>
        <dbReference type="HAMAP-Rule" id="MF_01302"/>
    </source>
</evidence>
<evidence type="ECO:0000305" key="2"/>
<comment type="function">
    <text evidence="1">One of the primary rRNA binding proteins, it binds directly to 16S rRNA central domain where it helps coordinate assembly of the platform of the 30S subunit.</text>
</comment>
<comment type="subunit">
    <text evidence="1">Part of the 30S ribosomal subunit. Contacts proteins S5 and S12.</text>
</comment>
<comment type="similarity">
    <text evidence="1">Belongs to the universal ribosomal protein uS8 family.</text>
</comment>
<name>RS8_CORU7</name>
<organism>
    <name type="scientific">Corynebacterium urealyticum (strain ATCC 43042 / DSM 7109)</name>
    <dbReference type="NCBI Taxonomy" id="504474"/>
    <lineage>
        <taxon>Bacteria</taxon>
        <taxon>Bacillati</taxon>
        <taxon>Actinomycetota</taxon>
        <taxon>Actinomycetes</taxon>
        <taxon>Mycobacteriales</taxon>
        <taxon>Corynebacteriaceae</taxon>
        <taxon>Corynebacterium</taxon>
    </lineage>
</organism>
<sequence>MTMTDPIADMLSRVRNASNAFHDSVTMPSSKLKAHIAEILKQEGYIEDFAVNDRKDGKAGKELEITLKYGPTRERALAGVRRVSKPGLRVYTKSTNLPKVLGGLGVAIISTSHGLLTDREASNKGVGGEVLAYVW</sequence>
<feature type="chain" id="PRO_1000140539" description="Small ribosomal subunit protein uS8">
    <location>
        <begin position="1"/>
        <end position="135"/>
    </location>
</feature>
<gene>
    <name evidence="1" type="primary">rpsH</name>
    <name type="ordered locus">cu0348</name>
</gene>
<accession>B1VEW9</accession>
<proteinExistence type="inferred from homology"/>